<name>LEPA_TRIV2</name>
<proteinExistence type="inferred from homology"/>
<feature type="chain" id="PRO_0000265635" description="Elongation factor 4">
    <location>
        <begin position="1"/>
        <end position="603"/>
    </location>
</feature>
<feature type="domain" description="tr-type G">
    <location>
        <begin position="7"/>
        <end position="189"/>
    </location>
</feature>
<feature type="binding site" evidence="1">
    <location>
        <begin position="19"/>
        <end position="24"/>
    </location>
    <ligand>
        <name>GTP</name>
        <dbReference type="ChEBI" id="CHEBI:37565"/>
    </ligand>
</feature>
<feature type="binding site" evidence="1">
    <location>
        <begin position="136"/>
        <end position="139"/>
    </location>
    <ligand>
        <name>GTP</name>
        <dbReference type="ChEBI" id="CHEBI:37565"/>
    </ligand>
</feature>
<reference key="1">
    <citation type="journal article" date="2014" name="Stand. Genomic Sci.">
        <title>Complete genome sequence of Anabaena variabilis ATCC 29413.</title>
        <authorList>
            <person name="Thiel T."/>
            <person name="Pratte B.S."/>
            <person name="Zhong J."/>
            <person name="Goodwin L."/>
            <person name="Copeland A."/>
            <person name="Lucas S."/>
            <person name="Han C."/>
            <person name="Pitluck S."/>
            <person name="Land M.L."/>
            <person name="Kyrpides N.C."/>
            <person name="Woyke T."/>
        </authorList>
    </citation>
    <scope>NUCLEOTIDE SEQUENCE [LARGE SCALE GENOMIC DNA]</scope>
    <source>
        <strain>ATCC 29413 / PCC 7937</strain>
    </source>
</reference>
<evidence type="ECO:0000255" key="1">
    <source>
        <dbReference type="HAMAP-Rule" id="MF_00071"/>
    </source>
</evidence>
<accession>Q3MG20</accession>
<organism>
    <name type="scientific">Trichormus variabilis (strain ATCC 29413 / PCC 7937)</name>
    <name type="common">Anabaena variabilis</name>
    <dbReference type="NCBI Taxonomy" id="240292"/>
    <lineage>
        <taxon>Bacteria</taxon>
        <taxon>Bacillati</taxon>
        <taxon>Cyanobacteriota</taxon>
        <taxon>Cyanophyceae</taxon>
        <taxon>Nostocales</taxon>
        <taxon>Nostocaceae</taxon>
        <taxon>Trichormus</taxon>
    </lineage>
</organism>
<keyword id="KW-0997">Cell inner membrane</keyword>
<keyword id="KW-1003">Cell membrane</keyword>
<keyword id="KW-0342">GTP-binding</keyword>
<keyword id="KW-0378">Hydrolase</keyword>
<keyword id="KW-0472">Membrane</keyword>
<keyword id="KW-0547">Nucleotide-binding</keyword>
<keyword id="KW-0648">Protein biosynthesis</keyword>
<sequence>MTDVPAVRIRNFCIIAHIDHGKSTLADRLLQATGTVDERQMKEQFLDNMDLERERGITIKLQAARMNYQAKDGQQYVLNLIDTPGHVDFSYEVSRSLAACEGALLVVDASQGVEAQTLANVYLALEHNLEIIPVLNKIDLPGAEPDRVIGEIEEIIGLDCSGAILASAKEGIGISEILEAVVERIPPPPNTVDQRLRALIFDSYYDIYRGVIVYFRVMDGTVKKGDRVYLMASEKEYEIDELGVLSPTQKPVDELHAGEVGYFGAAIKAVADARVGDTITLCNAKAAEALPGYTEANPMVFCGMFPIDADQFEDLREALEKLRLNDAALQYEPETSSAMGFGFRCGFLGLLHMEIVQERLEREYDLDLIITAPSVVYKVITTKGEELYIDNPSHLPAPNDRERIEEPYVKVEMITPETYVGTLMELSQNRRGIFKDMKYLTQGRTTLTYEIPLAEVVTDFFDQMKSRSRGYASMEYHLIGYRENPLVKLDIMINGDPVDSLAMIVHRDKAYGVGRSMAEKLKELIPRHQFKVPIQASIGSKVIASEHIPALRKDVLAKCYGGDISRKKKLLQKQAKGKKRMKSVGTVDVPQEAFMAVLRLDQS</sequence>
<protein>
    <recommendedName>
        <fullName evidence="1">Elongation factor 4</fullName>
        <shortName evidence="1">EF-4</shortName>
        <ecNumber evidence="1">3.6.5.n1</ecNumber>
    </recommendedName>
    <alternativeName>
        <fullName evidence="1">Ribosomal back-translocase LepA</fullName>
    </alternativeName>
</protein>
<gene>
    <name evidence="1" type="primary">lepA</name>
    <name type="ordered locus">Ava_0440</name>
</gene>
<dbReference type="EC" id="3.6.5.n1" evidence="1"/>
<dbReference type="EMBL" id="CP000117">
    <property type="protein sequence ID" value="ABA20066.1"/>
    <property type="molecule type" value="Genomic_DNA"/>
</dbReference>
<dbReference type="SMR" id="Q3MG20"/>
<dbReference type="STRING" id="240292.Ava_0440"/>
<dbReference type="KEGG" id="ava:Ava_0440"/>
<dbReference type="eggNOG" id="COG0481">
    <property type="taxonomic scope" value="Bacteria"/>
</dbReference>
<dbReference type="HOGENOM" id="CLU_009995_3_3_3"/>
<dbReference type="Proteomes" id="UP000002533">
    <property type="component" value="Chromosome"/>
</dbReference>
<dbReference type="GO" id="GO:0005886">
    <property type="term" value="C:plasma membrane"/>
    <property type="evidence" value="ECO:0007669"/>
    <property type="project" value="UniProtKB-SubCell"/>
</dbReference>
<dbReference type="GO" id="GO:0005525">
    <property type="term" value="F:GTP binding"/>
    <property type="evidence" value="ECO:0007669"/>
    <property type="project" value="UniProtKB-KW"/>
</dbReference>
<dbReference type="GO" id="GO:0003924">
    <property type="term" value="F:GTPase activity"/>
    <property type="evidence" value="ECO:0007669"/>
    <property type="project" value="InterPro"/>
</dbReference>
<dbReference type="GO" id="GO:0043022">
    <property type="term" value="F:ribosome binding"/>
    <property type="evidence" value="ECO:0007669"/>
    <property type="project" value="TreeGrafter"/>
</dbReference>
<dbReference type="GO" id="GO:0045727">
    <property type="term" value="P:positive regulation of translation"/>
    <property type="evidence" value="ECO:0007669"/>
    <property type="project" value="TreeGrafter"/>
</dbReference>
<dbReference type="GO" id="GO:0006412">
    <property type="term" value="P:translation"/>
    <property type="evidence" value="ECO:0007669"/>
    <property type="project" value="UniProtKB-KW"/>
</dbReference>
<dbReference type="CDD" id="cd03699">
    <property type="entry name" value="EF4_II"/>
    <property type="match status" value="1"/>
</dbReference>
<dbReference type="CDD" id="cd16260">
    <property type="entry name" value="EF4_III"/>
    <property type="match status" value="1"/>
</dbReference>
<dbReference type="CDD" id="cd01890">
    <property type="entry name" value="LepA"/>
    <property type="match status" value="1"/>
</dbReference>
<dbReference type="CDD" id="cd03709">
    <property type="entry name" value="lepA_C"/>
    <property type="match status" value="1"/>
</dbReference>
<dbReference type="FunFam" id="3.40.50.300:FF:000078">
    <property type="entry name" value="Elongation factor 4"/>
    <property type="match status" value="1"/>
</dbReference>
<dbReference type="FunFam" id="2.40.30.10:FF:000015">
    <property type="entry name" value="Translation factor GUF1, mitochondrial"/>
    <property type="match status" value="1"/>
</dbReference>
<dbReference type="FunFam" id="3.30.70.240:FF:000007">
    <property type="entry name" value="Translation factor GUF1, mitochondrial"/>
    <property type="match status" value="1"/>
</dbReference>
<dbReference type="FunFam" id="3.30.70.2570:FF:000001">
    <property type="entry name" value="Translation factor GUF1, mitochondrial"/>
    <property type="match status" value="1"/>
</dbReference>
<dbReference type="FunFam" id="3.30.70.870:FF:000004">
    <property type="entry name" value="Translation factor GUF1, mitochondrial"/>
    <property type="match status" value="1"/>
</dbReference>
<dbReference type="Gene3D" id="3.30.70.240">
    <property type="match status" value="1"/>
</dbReference>
<dbReference type="Gene3D" id="3.30.70.2570">
    <property type="entry name" value="Elongation factor 4, C-terminal domain"/>
    <property type="match status" value="1"/>
</dbReference>
<dbReference type="Gene3D" id="3.30.70.870">
    <property type="entry name" value="Elongation Factor G (Translational Gtpase), domain 3"/>
    <property type="match status" value="1"/>
</dbReference>
<dbReference type="Gene3D" id="3.40.50.300">
    <property type="entry name" value="P-loop containing nucleotide triphosphate hydrolases"/>
    <property type="match status" value="1"/>
</dbReference>
<dbReference type="Gene3D" id="2.40.30.10">
    <property type="entry name" value="Translation factors"/>
    <property type="match status" value="1"/>
</dbReference>
<dbReference type="HAMAP" id="MF_03138">
    <property type="entry name" value="GUFP"/>
    <property type="match status" value="1"/>
</dbReference>
<dbReference type="HAMAP" id="MF_00071">
    <property type="entry name" value="LepA"/>
    <property type="match status" value="1"/>
</dbReference>
<dbReference type="InterPro" id="IPR006297">
    <property type="entry name" value="EF-4"/>
</dbReference>
<dbReference type="InterPro" id="IPR035647">
    <property type="entry name" value="EFG_III/V"/>
</dbReference>
<dbReference type="InterPro" id="IPR000640">
    <property type="entry name" value="EFG_V-like"/>
</dbReference>
<dbReference type="InterPro" id="IPR004161">
    <property type="entry name" value="EFTu-like_2"/>
</dbReference>
<dbReference type="InterPro" id="IPR031157">
    <property type="entry name" value="G_TR_CS"/>
</dbReference>
<dbReference type="InterPro" id="IPR027518">
    <property type="entry name" value="GUFP"/>
</dbReference>
<dbReference type="InterPro" id="IPR038363">
    <property type="entry name" value="LepA_C_sf"/>
</dbReference>
<dbReference type="InterPro" id="IPR013842">
    <property type="entry name" value="LepA_CTD"/>
</dbReference>
<dbReference type="InterPro" id="IPR035654">
    <property type="entry name" value="LepA_IV"/>
</dbReference>
<dbReference type="InterPro" id="IPR027417">
    <property type="entry name" value="P-loop_NTPase"/>
</dbReference>
<dbReference type="InterPro" id="IPR005225">
    <property type="entry name" value="Small_GTP-bd"/>
</dbReference>
<dbReference type="InterPro" id="IPR000795">
    <property type="entry name" value="T_Tr_GTP-bd_dom"/>
</dbReference>
<dbReference type="NCBIfam" id="TIGR01393">
    <property type="entry name" value="lepA"/>
    <property type="match status" value="1"/>
</dbReference>
<dbReference type="NCBIfam" id="TIGR00231">
    <property type="entry name" value="small_GTP"/>
    <property type="match status" value="1"/>
</dbReference>
<dbReference type="PANTHER" id="PTHR43512:SF4">
    <property type="entry name" value="TRANSLATION FACTOR GUF1 HOMOLOG, CHLOROPLASTIC"/>
    <property type="match status" value="1"/>
</dbReference>
<dbReference type="PANTHER" id="PTHR43512">
    <property type="entry name" value="TRANSLATION FACTOR GUF1-RELATED"/>
    <property type="match status" value="1"/>
</dbReference>
<dbReference type="Pfam" id="PF00679">
    <property type="entry name" value="EFG_C"/>
    <property type="match status" value="1"/>
</dbReference>
<dbReference type="Pfam" id="PF00009">
    <property type="entry name" value="GTP_EFTU"/>
    <property type="match status" value="1"/>
</dbReference>
<dbReference type="Pfam" id="PF03144">
    <property type="entry name" value="GTP_EFTU_D2"/>
    <property type="match status" value="1"/>
</dbReference>
<dbReference type="Pfam" id="PF06421">
    <property type="entry name" value="LepA_C"/>
    <property type="match status" value="1"/>
</dbReference>
<dbReference type="PRINTS" id="PR00315">
    <property type="entry name" value="ELONGATNFCT"/>
</dbReference>
<dbReference type="SMART" id="SM00838">
    <property type="entry name" value="EFG_C"/>
    <property type="match status" value="1"/>
</dbReference>
<dbReference type="SUPFAM" id="SSF54980">
    <property type="entry name" value="EF-G C-terminal domain-like"/>
    <property type="match status" value="2"/>
</dbReference>
<dbReference type="SUPFAM" id="SSF52540">
    <property type="entry name" value="P-loop containing nucleoside triphosphate hydrolases"/>
    <property type="match status" value="1"/>
</dbReference>
<dbReference type="PROSITE" id="PS00301">
    <property type="entry name" value="G_TR_1"/>
    <property type="match status" value="1"/>
</dbReference>
<dbReference type="PROSITE" id="PS51722">
    <property type="entry name" value="G_TR_2"/>
    <property type="match status" value="1"/>
</dbReference>
<comment type="function">
    <text evidence="1">Required for accurate and efficient protein synthesis under certain stress conditions. May act as a fidelity factor of the translation reaction, by catalyzing a one-codon backward translocation of tRNAs on improperly translocated ribosomes. Back-translocation proceeds from a post-translocation (POST) complex to a pre-translocation (PRE) complex, thus giving elongation factor G a second chance to translocate the tRNAs correctly. Binds to ribosomes in a GTP-dependent manner.</text>
</comment>
<comment type="catalytic activity">
    <reaction evidence="1">
        <text>GTP + H2O = GDP + phosphate + H(+)</text>
        <dbReference type="Rhea" id="RHEA:19669"/>
        <dbReference type="ChEBI" id="CHEBI:15377"/>
        <dbReference type="ChEBI" id="CHEBI:15378"/>
        <dbReference type="ChEBI" id="CHEBI:37565"/>
        <dbReference type="ChEBI" id="CHEBI:43474"/>
        <dbReference type="ChEBI" id="CHEBI:58189"/>
        <dbReference type="EC" id="3.6.5.n1"/>
    </reaction>
</comment>
<comment type="subcellular location">
    <subcellularLocation>
        <location evidence="1">Cell inner membrane</location>
        <topology evidence="1">Peripheral membrane protein</topology>
        <orientation evidence="1">Cytoplasmic side</orientation>
    </subcellularLocation>
</comment>
<comment type="similarity">
    <text evidence="1">Belongs to the TRAFAC class translation factor GTPase superfamily. Classic translation factor GTPase family. LepA subfamily.</text>
</comment>